<accession>Q4FGF8</accession>
<accession>A9LYH3</accession>
<keyword id="KW-0066">ATP synthesis</keyword>
<keyword id="KW-0138">CF(0)</keyword>
<keyword id="KW-0150">Chloroplast</keyword>
<keyword id="KW-0375">Hydrogen ion transport</keyword>
<keyword id="KW-0406">Ion transport</keyword>
<keyword id="KW-0472">Membrane</keyword>
<keyword id="KW-0934">Plastid</keyword>
<keyword id="KW-0793">Thylakoid</keyword>
<keyword id="KW-0812">Transmembrane</keyword>
<keyword id="KW-1133">Transmembrane helix</keyword>
<keyword id="KW-0813">Transport</keyword>
<reference key="1">
    <citation type="journal article" date="2005" name="Mol. Biol. Evol.">
        <title>Identifying the basal angiosperm node in chloroplast genome phylogenies: sampling one's way out of the Felsenstein zone.</title>
        <authorList>
            <person name="Leebens-Mack J."/>
            <person name="Raubeson L.A."/>
            <person name="Cui L."/>
            <person name="Kuehl J.V."/>
            <person name="Fourcade M.H."/>
            <person name="Chumley T.W."/>
            <person name="Boore J.L."/>
            <person name="Jansen R.K."/>
            <person name="dePamphilis C.W."/>
        </authorList>
    </citation>
    <scope>NUCLEOTIDE SEQUENCE [GENOMIC DNA]</scope>
</reference>
<reference key="2">
    <citation type="submission" date="2007-11" db="EMBL/GenBank/DDBJ databases">
        <title>The complete chloroplast genome of Acorus americanus.</title>
        <authorList>
            <person name="Peery R.M."/>
            <person name="Chumley T.W."/>
            <person name="Kuehl J.V."/>
            <person name="Boore J.L."/>
            <person name="Raubeson L.A."/>
        </authorList>
    </citation>
    <scope>NUCLEOTIDE SEQUENCE [LARGE SCALE GENOMIC DNA]</scope>
</reference>
<sequence>MNVILCSSNMLKGLYDISGVEVGQHLYWQIGGFQVHAQVLITSWVVIAILLGSVTVAVRNPQTIPTNGQNFFEYVLEFIRDLSKTQIGEEYGPWVPFIGTMFLFIFVSNWSGALLPWKLIELPHGELAAPTNDINTTVALALPTSVAYFYAGLTKKGLGYFGKYIQPTPILLPINILEDFTKPLSLSFRLFGNILADELVVVVLVSLVPLVVPIPVMFLGLFTSGIQALIFATLAAAYIGESMEGHH</sequence>
<proteinExistence type="inferred from homology"/>
<dbReference type="EMBL" id="DQ069373">
    <property type="protein sequence ID" value="AAZ03817.1"/>
    <property type="molecule type" value="Genomic_DNA"/>
</dbReference>
<dbReference type="EMBL" id="EU273602">
    <property type="protein sequence ID" value="ABX38732.1"/>
    <property type="molecule type" value="Genomic_DNA"/>
</dbReference>
<dbReference type="RefSeq" id="YP_001586170.1">
    <property type="nucleotide sequence ID" value="NC_010093.1"/>
</dbReference>
<dbReference type="SMR" id="Q4FGF8"/>
<dbReference type="GeneID" id="5777737"/>
<dbReference type="GO" id="GO:0009535">
    <property type="term" value="C:chloroplast thylakoid membrane"/>
    <property type="evidence" value="ECO:0007669"/>
    <property type="project" value="UniProtKB-SubCell"/>
</dbReference>
<dbReference type="GO" id="GO:0005886">
    <property type="term" value="C:plasma membrane"/>
    <property type="evidence" value="ECO:0007669"/>
    <property type="project" value="UniProtKB-UniRule"/>
</dbReference>
<dbReference type="GO" id="GO:0045259">
    <property type="term" value="C:proton-transporting ATP synthase complex"/>
    <property type="evidence" value="ECO:0007669"/>
    <property type="project" value="UniProtKB-KW"/>
</dbReference>
<dbReference type="GO" id="GO:0046933">
    <property type="term" value="F:proton-transporting ATP synthase activity, rotational mechanism"/>
    <property type="evidence" value="ECO:0007669"/>
    <property type="project" value="UniProtKB-UniRule"/>
</dbReference>
<dbReference type="CDD" id="cd00310">
    <property type="entry name" value="ATP-synt_Fo_a_6"/>
    <property type="match status" value="1"/>
</dbReference>
<dbReference type="FunFam" id="1.20.120.220:FF:000001">
    <property type="entry name" value="ATP synthase subunit a, chloroplastic"/>
    <property type="match status" value="1"/>
</dbReference>
<dbReference type="Gene3D" id="1.20.120.220">
    <property type="entry name" value="ATP synthase, F0 complex, subunit A"/>
    <property type="match status" value="1"/>
</dbReference>
<dbReference type="HAMAP" id="MF_01393">
    <property type="entry name" value="ATP_synth_a_bact"/>
    <property type="match status" value="1"/>
</dbReference>
<dbReference type="InterPro" id="IPR045082">
    <property type="entry name" value="ATP_syn_F0_a_bact/chloroplast"/>
</dbReference>
<dbReference type="InterPro" id="IPR000568">
    <property type="entry name" value="ATP_synth_F0_asu"/>
</dbReference>
<dbReference type="InterPro" id="IPR023011">
    <property type="entry name" value="ATP_synth_F0_asu_AS"/>
</dbReference>
<dbReference type="InterPro" id="IPR035908">
    <property type="entry name" value="F0_ATP_A_sf"/>
</dbReference>
<dbReference type="NCBIfam" id="TIGR01131">
    <property type="entry name" value="ATP_synt_6_or_A"/>
    <property type="match status" value="1"/>
</dbReference>
<dbReference type="PANTHER" id="PTHR42823">
    <property type="entry name" value="ATP SYNTHASE SUBUNIT A, CHLOROPLASTIC"/>
    <property type="match status" value="1"/>
</dbReference>
<dbReference type="PANTHER" id="PTHR42823:SF3">
    <property type="entry name" value="ATP SYNTHASE SUBUNIT A, CHLOROPLASTIC"/>
    <property type="match status" value="1"/>
</dbReference>
<dbReference type="Pfam" id="PF00119">
    <property type="entry name" value="ATP-synt_A"/>
    <property type="match status" value="1"/>
</dbReference>
<dbReference type="PRINTS" id="PR00123">
    <property type="entry name" value="ATPASEA"/>
</dbReference>
<dbReference type="SUPFAM" id="SSF81336">
    <property type="entry name" value="F1F0 ATP synthase subunit A"/>
    <property type="match status" value="1"/>
</dbReference>
<dbReference type="PROSITE" id="PS00449">
    <property type="entry name" value="ATPASE_A"/>
    <property type="match status" value="1"/>
</dbReference>
<comment type="function">
    <text evidence="1">Key component of the proton channel; it plays a direct role in the translocation of protons across the membrane.</text>
</comment>
<comment type="subunit">
    <text evidence="1">F-type ATPases have 2 components, CF(1) - the catalytic core - and CF(0) - the membrane proton channel. CF(1) has five subunits: alpha(3), beta(3), gamma(1), delta(1), epsilon(1). CF(0) has four main subunits: a, b, b' and c.</text>
</comment>
<comment type="subcellular location">
    <subcellularLocation>
        <location evidence="1">Plastid</location>
        <location evidence="1">Chloroplast thylakoid membrane</location>
        <topology evidence="1">Multi-pass membrane protein</topology>
    </subcellularLocation>
</comment>
<comment type="similarity">
    <text evidence="1">Belongs to the ATPase A chain family.</text>
</comment>
<geneLocation type="chloroplast"/>
<gene>
    <name evidence="1" type="primary">atpI</name>
</gene>
<protein>
    <recommendedName>
        <fullName evidence="1">ATP synthase subunit a, chloroplastic</fullName>
    </recommendedName>
    <alternativeName>
        <fullName evidence="1">ATP synthase F0 sector subunit a</fullName>
    </alternativeName>
    <alternativeName>
        <fullName evidence="1">F-ATPase subunit IV</fullName>
    </alternativeName>
</protein>
<evidence type="ECO:0000255" key="1">
    <source>
        <dbReference type="HAMAP-Rule" id="MF_01393"/>
    </source>
</evidence>
<feature type="chain" id="PRO_0000362523" description="ATP synthase subunit a, chloroplastic">
    <location>
        <begin position="1"/>
        <end position="247"/>
    </location>
</feature>
<feature type="transmembrane region" description="Helical" evidence="1">
    <location>
        <begin position="38"/>
        <end position="58"/>
    </location>
</feature>
<feature type="transmembrane region" description="Helical" evidence="1">
    <location>
        <begin position="95"/>
        <end position="115"/>
    </location>
</feature>
<feature type="transmembrane region" description="Helical" evidence="1">
    <location>
        <begin position="134"/>
        <end position="154"/>
    </location>
</feature>
<feature type="transmembrane region" description="Helical" evidence="1">
    <location>
        <begin position="199"/>
        <end position="219"/>
    </location>
</feature>
<feature type="transmembrane region" description="Helical" evidence="1">
    <location>
        <begin position="220"/>
        <end position="240"/>
    </location>
</feature>
<name>ATPI_ACOCI</name>
<organism>
    <name type="scientific">Acorus calamus var. americanus</name>
    <name type="common">American sweet flag</name>
    <name type="synonym">Acorus americanus</name>
    <dbReference type="NCBI Taxonomy" id="263995"/>
    <lineage>
        <taxon>Eukaryota</taxon>
        <taxon>Viridiplantae</taxon>
        <taxon>Streptophyta</taxon>
        <taxon>Embryophyta</taxon>
        <taxon>Tracheophyta</taxon>
        <taxon>Spermatophyta</taxon>
        <taxon>Magnoliopsida</taxon>
        <taxon>Liliopsida</taxon>
        <taxon>Acoraceae</taxon>
        <taxon>Acorus</taxon>
    </lineage>
</organism>